<name>CFTR_PANTR</name>
<accession>Q2QLE5</accession>
<feature type="chain" id="PRO_0000226053" description="Cystic fibrosis transmembrane conductance regulator">
    <location>
        <begin position="1"/>
        <end position="1480"/>
    </location>
</feature>
<feature type="topological domain" description="Cytoplasmic" evidence="1">
    <location>
        <begin position="1"/>
        <end position="77"/>
    </location>
</feature>
<feature type="transmembrane region" description="Helical; Name=1" evidence="1">
    <location>
        <begin position="78"/>
        <end position="98"/>
    </location>
</feature>
<feature type="topological domain" description="Extracellular" evidence="1">
    <location>
        <begin position="99"/>
        <end position="122"/>
    </location>
</feature>
<feature type="transmembrane region" description="Helical; Name=2" evidence="1">
    <location>
        <begin position="123"/>
        <end position="146"/>
    </location>
</feature>
<feature type="topological domain" description="Cytoplasmic" evidence="1">
    <location>
        <begin position="147"/>
        <end position="195"/>
    </location>
</feature>
<feature type="transmembrane region" description="Helical; Name=3" evidence="1">
    <location>
        <begin position="196"/>
        <end position="216"/>
    </location>
</feature>
<feature type="topological domain" description="Extracellular" evidence="1">
    <location>
        <begin position="217"/>
        <end position="222"/>
    </location>
</feature>
<feature type="transmembrane region" description="Helical; Name=4" evidence="1">
    <location>
        <begin position="223"/>
        <end position="243"/>
    </location>
</feature>
<feature type="topological domain" description="Cytoplasmic" evidence="1">
    <location>
        <begin position="244"/>
        <end position="298"/>
    </location>
</feature>
<feature type="transmembrane region" description="Helical; Name=5" evidence="1">
    <location>
        <begin position="299"/>
        <end position="319"/>
    </location>
</feature>
<feature type="topological domain" description="Extracellular" evidence="1">
    <location>
        <begin position="320"/>
        <end position="339"/>
    </location>
</feature>
<feature type="transmembrane region" description="Helical; Name=6" evidence="1">
    <location>
        <begin position="340"/>
        <end position="358"/>
    </location>
</feature>
<feature type="topological domain" description="Cytoplasmic" evidence="1">
    <location>
        <begin position="359"/>
        <end position="858"/>
    </location>
</feature>
<feature type="transmembrane region" description="Helical; Name=7" evidence="1">
    <location>
        <begin position="859"/>
        <end position="879"/>
    </location>
</feature>
<feature type="topological domain" description="Extracellular" evidence="1">
    <location>
        <begin position="880"/>
        <end position="918"/>
    </location>
</feature>
<feature type="transmembrane region" description="Discontinuously helical; Name=8" evidence="1">
    <location>
        <begin position="919"/>
        <end position="939"/>
    </location>
</feature>
<feature type="topological domain" description="Cytoplasmic" evidence="1">
    <location>
        <begin position="940"/>
        <end position="990"/>
    </location>
</feature>
<feature type="transmembrane region" description="Helical; Name=9" evidence="1">
    <location>
        <begin position="991"/>
        <end position="1011"/>
    </location>
</feature>
<feature type="topological domain" description="Extracellular" evidence="1">
    <location>
        <begin position="1012"/>
        <end position="1013"/>
    </location>
</feature>
<feature type="transmembrane region" description="Helical; Name=10" evidence="1">
    <location>
        <begin position="1014"/>
        <end position="1034"/>
    </location>
</feature>
<feature type="topological domain" description="Cytoplasmic" evidence="1">
    <location>
        <begin position="1035"/>
        <end position="1095"/>
    </location>
</feature>
<feature type="transmembrane region" description="Helical; Name=11" evidence="1">
    <location>
        <begin position="1096"/>
        <end position="1116"/>
    </location>
</feature>
<feature type="topological domain" description="Extracellular" evidence="1">
    <location>
        <begin position="1117"/>
        <end position="1130"/>
    </location>
</feature>
<feature type="transmembrane region" description="Helical; Name=12" evidence="1">
    <location>
        <begin position="1131"/>
        <end position="1151"/>
    </location>
</feature>
<feature type="topological domain" description="Cytoplasmic" evidence="1">
    <location>
        <begin position="1152"/>
        <end position="1480"/>
    </location>
</feature>
<feature type="domain" description="ABC transmembrane type-1 1" evidence="6">
    <location>
        <begin position="81"/>
        <end position="365"/>
    </location>
</feature>
<feature type="domain" description="ABC transporter 1" evidence="5">
    <location>
        <begin position="423"/>
        <end position="646"/>
    </location>
</feature>
<feature type="domain" description="ABC transmembrane type-1 2" evidence="6">
    <location>
        <begin position="859"/>
        <end position="1155"/>
    </location>
</feature>
<feature type="domain" description="ABC transporter 2" evidence="5">
    <location>
        <begin position="1210"/>
        <end position="1443"/>
    </location>
</feature>
<feature type="region of interest" description="Disordered R region" evidence="1">
    <location>
        <begin position="654"/>
        <end position="831"/>
    </location>
</feature>
<feature type="region of interest" description="Interaction with GORASP2" evidence="1">
    <location>
        <begin position="1386"/>
        <end position="1480"/>
    </location>
</feature>
<feature type="region of interest" description="Disordered" evidence="7">
    <location>
        <begin position="1452"/>
        <end position="1480"/>
    </location>
</feature>
<feature type="short sequence motif" description="PDZ-binding" evidence="1">
    <location>
        <begin position="1478"/>
        <end position="1480"/>
    </location>
</feature>
<feature type="compositionally biased region" description="Acidic residues" evidence="7">
    <location>
        <begin position="1470"/>
        <end position="1480"/>
    </location>
</feature>
<feature type="binding site" evidence="1">
    <location>
        <position position="401"/>
    </location>
    <ligand>
        <name>ATP</name>
        <dbReference type="ChEBI" id="CHEBI:30616"/>
        <label>1</label>
    </ligand>
</feature>
<feature type="binding site" evidence="1">
    <location>
        <position position="434"/>
    </location>
    <ligand>
        <name>ATP</name>
        <dbReference type="ChEBI" id="CHEBI:30616"/>
        <label>1</label>
    </ligand>
</feature>
<feature type="binding site" evidence="5">
    <location>
        <begin position="458"/>
        <end position="465"/>
    </location>
    <ligand>
        <name>ATP</name>
        <dbReference type="ChEBI" id="CHEBI:30616"/>
        <label>1</label>
    </ligand>
</feature>
<feature type="binding site" evidence="2">
    <location>
        <position position="493"/>
    </location>
    <ligand>
        <name>ATP</name>
        <dbReference type="ChEBI" id="CHEBI:30616"/>
        <label>1</label>
    </ligand>
</feature>
<feature type="binding site" evidence="1">
    <location>
        <position position="1219"/>
    </location>
    <ligand>
        <name>ATP</name>
        <dbReference type="ChEBI" id="CHEBI:30616"/>
        <label>2</label>
    </ligand>
</feature>
<feature type="binding site" evidence="5">
    <location>
        <begin position="1244"/>
        <end position="1251"/>
    </location>
    <ligand>
        <name>ATP</name>
        <dbReference type="ChEBI" id="CHEBI:30616"/>
        <label>2</label>
    </ligand>
</feature>
<feature type="modified residue" description="Phosphoserine" evidence="1">
    <location>
        <position position="549"/>
    </location>
</feature>
<feature type="modified residue" description="Phosphoserine" evidence="1">
    <location>
        <position position="660"/>
    </location>
</feature>
<feature type="modified residue" description="Phosphoserine; by PKA" evidence="1">
    <location>
        <position position="670"/>
    </location>
</feature>
<feature type="modified residue" description="Phosphoserine" evidence="1">
    <location>
        <position position="686"/>
    </location>
</feature>
<feature type="modified residue" description="Phosphoserine" evidence="1">
    <location>
        <position position="700"/>
    </location>
</feature>
<feature type="modified residue" description="Phosphoserine" evidence="1">
    <location>
        <position position="712"/>
    </location>
</feature>
<feature type="modified residue" description="Phosphothreonine" evidence="1">
    <location>
        <position position="717"/>
    </location>
</feature>
<feature type="modified residue" description="Phosphoserine" evidence="1">
    <location>
        <position position="737"/>
    </location>
</feature>
<feature type="modified residue" description="Phosphoserine" evidence="1">
    <location>
        <position position="753"/>
    </location>
</feature>
<feature type="modified residue" description="Phosphoserine" evidence="1">
    <location>
        <position position="768"/>
    </location>
</feature>
<feature type="modified residue" description="Phosphoserine" evidence="1">
    <location>
        <position position="790"/>
    </location>
</feature>
<feature type="modified residue" description="Phosphoserine" evidence="1">
    <location>
        <position position="795"/>
    </location>
</feature>
<feature type="modified residue" description="Phosphoserine" evidence="1">
    <location>
        <position position="813"/>
    </location>
</feature>
<feature type="modified residue" description="Phosphoserine" evidence="1">
    <location>
        <position position="1444"/>
    </location>
</feature>
<feature type="modified residue" description="Phosphoserine" evidence="1">
    <location>
        <position position="1456"/>
    </location>
</feature>
<feature type="lipid moiety-binding region" description="S-palmitoyl cysteine" evidence="1">
    <location>
        <position position="524"/>
    </location>
</feature>
<feature type="lipid moiety-binding region" description="S-palmitoyl cysteine" evidence="1">
    <location>
        <position position="1395"/>
    </location>
</feature>
<feature type="glycosylation site" description="N-linked (GlcNAc...) asparagine" evidence="4">
    <location>
        <position position="894"/>
    </location>
</feature>
<feature type="glycosylation site" description="N-linked (GlcNAc...) asparagine" evidence="4">
    <location>
        <position position="900"/>
    </location>
</feature>
<feature type="cross-link" description="Glycyl lysine isopeptide (Lys-Gly) (interchain with G-Cter in ubiquitin)" evidence="1">
    <location>
        <position position="688"/>
    </location>
</feature>
<dbReference type="EC" id="5.6.1.6" evidence="1"/>
<dbReference type="EMBL" id="DP000016">
    <property type="protein sequence ID" value="AAR16253.1"/>
    <property type="molecule type" value="Genomic_DNA"/>
</dbReference>
<dbReference type="RefSeq" id="NP_001073386.1">
    <property type="nucleotide sequence ID" value="NM_001079917.1"/>
</dbReference>
<dbReference type="BMRB" id="Q2QLE5"/>
<dbReference type="SMR" id="Q2QLE5"/>
<dbReference type="FunCoup" id="Q2QLE5">
    <property type="interactions" value="552"/>
</dbReference>
<dbReference type="STRING" id="9598.ENSPTRP00000033597"/>
<dbReference type="GlyCosmos" id="Q2QLE5">
    <property type="glycosylation" value="2 sites, No reported glycans"/>
</dbReference>
<dbReference type="PaxDb" id="9598-ENSPTRP00000033597"/>
<dbReference type="Ensembl" id="ENSPTRT00000036339.4">
    <property type="protein sequence ID" value="ENSPTRP00000033597.3"/>
    <property type="gene ID" value="ENSPTRG00000019619.6"/>
</dbReference>
<dbReference type="GeneID" id="463674"/>
<dbReference type="KEGG" id="ptr:463674"/>
<dbReference type="CTD" id="1080"/>
<dbReference type="VGNC" id="VGNC:107818">
    <property type="gene designation" value="CFTR"/>
</dbReference>
<dbReference type="eggNOG" id="KOG0054">
    <property type="taxonomic scope" value="Eukaryota"/>
</dbReference>
<dbReference type="GeneTree" id="ENSGT00940000158567"/>
<dbReference type="HOGENOM" id="CLU_000604_27_1_1"/>
<dbReference type="InParanoid" id="Q2QLE5"/>
<dbReference type="OrthoDB" id="5503at9604"/>
<dbReference type="TreeFam" id="TF105200"/>
<dbReference type="Proteomes" id="UP000002277">
    <property type="component" value="Chromosome 7"/>
</dbReference>
<dbReference type="Bgee" id="ENSPTRG00000019619">
    <property type="expression patterns" value="Expressed in liver and 2 other cell types or tissues"/>
</dbReference>
<dbReference type="GO" id="GO:0016324">
    <property type="term" value="C:apical plasma membrane"/>
    <property type="evidence" value="ECO:0000250"/>
    <property type="project" value="UniProtKB"/>
</dbReference>
<dbReference type="GO" id="GO:0009986">
    <property type="term" value="C:cell surface"/>
    <property type="evidence" value="ECO:0007669"/>
    <property type="project" value="Ensembl"/>
</dbReference>
<dbReference type="GO" id="GO:0034707">
    <property type="term" value="C:chloride channel complex"/>
    <property type="evidence" value="ECO:0007669"/>
    <property type="project" value="UniProtKB-KW"/>
</dbReference>
<dbReference type="GO" id="GO:0005829">
    <property type="term" value="C:cytosol"/>
    <property type="evidence" value="ECO:0000318"/>
    <property type="project" value="GO_Central"/>
</dbReference>
<dbReference type="GO" id="GO:0005769">
    <property type="term" value="C:early endosome"/>
    <property type="evidence" value="ECO:0000250"/>
    <property type="project" value="UniProtKB"/>
</dbReference>
<dbReference type="GO" id="GO:0031901">
    <property type="term" value="C:early endosome membrane"/>
    <property type="evidence" value="ECO:0007669"/>
    <property type="project" value="UniProtKB-SubCell"/>
</dbReference>
<dbReference type="GO" id="GO:0005789">
    <property type="term" value="C:endoplasmic reticulum membrane"/>
    <property type="evidence" value="ECO:0000250"/>
    <property type="project" value="UniProtKB"/>
</dbReference>
<dbReference type="GO" id="GO:0016020">
    <property type="term" value="C:membrane"/>
    <property type="evidence" value="ECO:0000250"/>
    <property type="project" value="UniProtKB"/>
</dbReference>
<dbReference type="GO" id="GO:0005634">
    <property type="term" value="C:nucleus"/>
    <property type="evidence" value="ECO:0000250"/>
    <property type="project" value="UniProtKB"/>
</dbReference>
<dbReference type="GO" id="GO:0005886">
    <property type="term" value="C:plasma membrane"/>
    <property type="evidence" value="ECO:0000250"/>
    <property type="project" value="UniProtKB"/>
</dbReference>
<dbReference type="GO" id="GO:0055038">
    <property type="term" value="C:recycling endosome membrane"/>
    <property type="evidence" value="ECO:0007669"/>
    <property type="project" value="UniProtKB-SubCell"/>
</dbReference>
<dbReference type="GO" id="GO:0071889">
    <property type="term" value="F:14-3-3 protein binding"/>
    <property type="evidence" value="ECO:0007669"/>
    <property type="project" value="Ensembl"/>
</dbReference>
<dbReference type="GO" id="GO:0140359">
    <property type="term" value="F:ABC-type transporter activity"/>
    <property type="evidence" value="ECO:0007669"/>
    <property type="project" value="InterPro"/>
</dbReference>
<dbReference type="GO" id="GO:0005524">
    <property type="term" value="F:ATP binding"/>
    <property type="evidence" value="ECO:0007669"/>
    <property type="project" value="UniProtKB-KW"/>
</dbReference>
<dbReference type="GO" id="GO:0016887">
    <property type="term" value="F:ATP hydrolysis activity"/>
    <property type="evidence" value="ECO:0000250"/>
    <property type="project" value="UniProtKB"/>
</dbReference>
<dbReference type="GO" id="GO:0042626">
    <property type="term" value="F:ATPase-coupled transmembrane transporter activity"/>
    <property type="evidence" value="ECO:0000318"/>
    <property type="project" value="GO_Central"/>
</dbReference>
<dbReference type="GO" id="GO:0015106">
    <property type="term" value="F:bicarbonate transmembrane transporter activity"/>
    <property type="evidence" value="ECO:0000250"/>
    <property type="project" value="UniProtKB"/>
</dbReference>
<dbReference type="GO" id="GO:0005254">
    <property type="term" value="F:chloride channel activity"/>
    <property type="evidence" value="ECO:0000250"/>
    <property type="project" value="UniProtKB"/>
</dbReference>
<dbReference type="GO" id="GO:0019869">
    <property type="term" value="F:chloride channel inhibitor activity"/>
    <property type="evidence" value="ECO:0000250"/>
    <property type="project" value="UniProtKB"/>
</dbReference>
<dbReference type="GO" id="GO:0015108">
    <property type="term" value="F:chloride transmembrane transporter activity"/>
    <property type="evidence" value="ECO:0000250"/>
    <property type="project" value="UniProtKB"/>
</dbReference>
<dbReference type="GO" id="GO:0019899">
    <property type="term" value="F:enzyme binding"/>
    <property type="evidence" value="ECO:0007669"/>
    <property type="project" value="Ensembl"/>
</dbReference>
<dbReference type="GO" id="GO:0005260">
    <property type="term" value="F:intracellularly ATP-gated chloride channel activity"/>
    <property type="evidence" value="ECO:0000250"/>
    <property type="project" value="UniProtKB"/>
</dbReference>
<dbReference type="GO" id="GO:0030165">
    <property type="term" value="F:PDZ domain binding"/>
    <property type="evidence" value="ECO:0007669"/>
    <property type="project" value="Ensembl"/>
</dbReference>
<dbReference type="GO" id="GO:0051087">
    <property type="term" value="F:protein-folding chaperone binding"/>
    <property type="evidence" value="ECO:0007669"/>
    <property type="project" value="Ensembl"/>
</dbReference>
<dbReference type="GO" id="GO:0106138">
    <property type="term" value="F:Sec61 translocon complex binding"/>
    <property type="evidence" value="ECO:0007669"/>
    <property type="project" value="Ensembl"/>
</dbReference>
<dbReference type="GO" id="GO:0097186">
    <property type="term" value="P:amelogenesis"/>
    <property type="evidence" value="ECO:0007669"/>
    <property type="project" value="Ensembl"/>
</dbReference>
<dbReference type="GO" id="GO:0015701">
    <property type="term" value="P:bicarbonate transport"/>
    <property type="evidence" value="ECO:0000250"/>
    <property type="project" value="UniProtKB"/>
</dbReference>
<dbReference type="GO" id="GO:0071320">
    <property type="term" value="P:cellular response to cAMP"/>
    <property type="evidence" value="ECO:0000250"/>
    <property type="project" value="UniProtKB"/>
</dbReference>
<dbReference type="GO" id="GO:1904322">
    <property type="term" value="P:cellular response to forskolin"/>
    <property type="evidence" value="ECO:0000250"/>
    <property type="project" value="UniProtKB"/>
</dbReference>
<dbReference type="GO" id="GO:1902476">
    <property type="term" value="P:chloride transmembrane transport"/>
    <property type="evidence" value="ECO:0000250"/>
    <property type="project" value="UniProtKB"/>
</dbReference>
<dbReference type="GO" id="GO:0006695">
    <property type="term" value="P:cholesterol biosynthetic process"/>
    <property type="evidence" value="ECO:0007669"/>
    <property type="project" value="Ensembl"/>
</dbReference>
<dbReference type="GO" id="GO:0030301">
    <property type="term" value="P:cholesterol transport"/>
    <property type="evidence" value="ECO:0007669"/>
    <property type="project" value="Ensembl"/>
</dbReference>
<dbReference type="GO" id="GO:0051649">
    <property type="term" value="P:establishment of localization in cell"/>
    <property type="evidence" value="ECO:0007669"/>
    <property type="project" value="Ensembl"/>
</dbReference>
<dbReference type="GO" id="GO:0051454">
    <property type="term" value="P:intracellular pH elevation"/>
    <property type="evidence" value="ECO:0000250"/>
    <property type="project" value="UniProtKB"/>
</dbReference>
<dbReference type="GO" id="GO:0060081">
    <property type="term" value="P:membrane hyperpolarization"/>
    <property type="evidence" value="ECO:0000250"/>
    <property type="project" value="UniProtKB"/>
</dbReference>
<dbReference type="GO" id="GO:0050891">
    <property type="term" value="P:multicellular organismal-level water homeostasis"/>
    <property type="evidence" value="ECO:0000250"/>
    <property type="project" value="UniProtKB"/>
</dbReference>
<dbReference type="GO" id="GO:0070175">
    <property type="term" value="P:positive regulation of enamel mineralization"/>
    <property type="evidence" value="ECO:0007669"/>
    <property type="project" value="Ensembl"/>
</dbReference>
<dbReference type="GO" id="GO:0045921">
    <property type="term" value="P:positive regulation of exocytosis"/>
    <property type="evidence" value="ECO:0007669"/>
    <property type="project" value="Ensembl"/>
</dbReference>
<dbReference type="GO" id="GO:0035774">
    <property type="term" value="P:positive regulation of insulin secretion involved in cellular response to glucose stimulus"/>
    <property type="evidence" value="ECO:0007669"/>
    <property type="project" value="Ensembl"/>
</dbReference>
<dbReference type="GO" id="GO:0034976">
    <property type="term" value="P:response to endoplasmic reticulum stress"/>
    <property type="evidence" value="ECO:0000250"/>
    <property type="project" value="UniProtKB"/>
</dbReference>
<dbReference type="GO" id="GO:0048240">
    <property type="term" value="P:sperm capacitation"/>
    <property type="evidence" value="ECO:0000250"/>
    <property type="project" value="UniProtKB"/>
</dbReference>
<dbReference type="GO" id="GO:0035377">
    <property type="term" value="P:transepithelial water transport"/>
    <property type="evidence" value="ECO:0000250"/>
    <property type="project" value="UniProtKB"/>
</dbReference>
<dbReference type="GO" id="GO:0006904">
    <property type="term" value="P:vesicle docking involved in exocytosis"/>
    <property type="evidence" value="ECO:0007669"/>
    <property type="project" value="Ensembl"/>
</dbReference>
<dbReference type="CDD" id="cd18594">
    <property type="entry name" value="ABC_6TM_CFTR_D1"/>
    <property type="match status" value="1"/>
</dbReference>
<dbReference type="CDD" id="cd18600">
    <property type="entry name" value="ABC_6TM_CFTR_D2"/>
    <property type="match status" value="1"/>
</dbReference>
<dbReference type="CDD" id="cd03291">
    <property type="entry name" value="ABCC_CFTR1"/>
    <property type="match status" value="1"/>
</dbReference>
<dbReference type="CDD" id="cd03289">
    <property type="entry name" value="ABCC_CFTR2"/>
    <property type="match status" value="1"/>
</dbReference>
<dbReference type="FunFam" id="1.20.1560.10:FF:000017">
    <property type="entry name" value="Cystic fibrosis transmembrane conductance regulator"/>
    <property type="match status" value="1"/>
</dbReference>
<dbReference type="FunFam" id="1.20.1560.10:FF:000019">
    <property type="entry name" value="Cystic fibrosis transmembrane conductance regulator"/>
    <property type="match status" value="1"/>
</dbReference>
<dbReference type="FunFam" id="3.40.50.300:FF:000581">
    <property type="entry name" value="Cystic fibrosis transmembrane conductance regulator"/>
    <property type="match status" value="1"/>
</dbReference>
<dbReference type="FunFam" id="3.40.50.300:FF:000591">
    <property type="entry name" value="Cystic fibrosis transmembrane conductance regulator"/>
    <property type="match status" value="1"/>
</dbReference>
<dbReference type="Gene3D" id="1.20.1560.10">
    <property type="entry name" value="ABC transporter type 1, transmembrane domain"/>
    <property type="match status" value="2"/>
</dbReference>
<dbReference type="Gene3D" id="3.40.50.300">
    <property type="entry name" value="P-loop containing nucleotide triphosphate hydrolases"/>
    <property type="match status" value="2"/>
</dbReference>
<dbReference type="InterPro" id="IPR003593">
    <property type="entry name" value="AAA+_ATPase"/>
</dbReference>
<dbReference type="InterPro" id="IPR011527">
    <property type="entry name" value="ABC1_TM_dom"/>
</dbReference>
<dbReference type="InterPro" id="IPR036640">
    <property type="entry name" value="ABC1_TM_sf"/>
</dbReference>
<dbReference type="InterPro" id="IPR003439">
    <property type="entry name" value="ABC_transporter-like_ATP-bd"/>
</dbReference>
<dbReference type="InterPro" id="IPR017871">
    <property type="entry name" value="ABC_transporter-like_CS"/>
</dbReference>
<dbReference type="InterPro" id="IPR050173">
    <property type="entry name" value="ABC_transporter_C-like"/>
</dbReference>
<dbReference type="InterPro" id="IPR009147">
    <property type="entry name" value="CFTR/ABCC7"/>
</dbReference>
<dbReference type="InterPro" id="IPR047082">
    <property type="entry name" value="CFTR1_ATP-bd_dom1"/>
</dbReference>
<dbReference type="InterPro" id="IPR025837">
    <property type="entry name" value="CFTR_reg_dom"/>
</dbReference>
<dbReference type="InterPro" id="IPR027417">
    <property type="entry name" value="P-loop_NTPase"/>
</dbReference>
<dbReference type="NCBIfam" id="TIGR01271">
    <property type="entry name" value="CFTR_protein"/>
    <property type="match status" value="1"/>
</dbReference>
<dbReference type="PANTHER" id="PTHR24223">
    <property type="entry name" value="ATP-BINDING CASSETTE SUB-FAMILY C"/>
    <property type="match status" value="1"/>
</dbReference>
<dbReference type="PANTHER" id="PTHR24223:SF19">
    <property type="entry name" value="CYSTIC FIBROSIS TRANSMEMBRANE CONDUCTANCE REGULATOR"/>
    <property type="match status" value="1"/>
</dbReference>
<dbReference type="Pfam" id="PF00664">
    <property type="entry name" value="ABC_membrane"/>
    <property type="match status" value="2"/>
</dbReference>
<dbReference type="Pfam" id="PF00005">
    <property type="entry name" value="ABC_tran"/>
    <property type="match status" value="2"/>
</dbReference>
<dbReference type="Pfam" id="PF14396">
    <property type="entry name" value="CFTR_R"/>
    <property type="match status" value="1"/>
</dbReference>
<dbReference type="PRINTS" id="PR01851">
    <property type="entry name" value="CYSFIBREGLTR"/>
</dbReference>
<dbReference type="SMART" id="SM00382">
    <property type="entry name" value="AAA"/>
    <property type="match status" value="2"/>
</dbReference>
<dbReference type="SUPFAM" id="SSF90123">
    <property type="entry name" value="ABC transporter transmembrane region"/>
    <property type="match status" value="2"/>
</dbReference>
<dbReference type="SUPFAM" id="SSF52540">
    <property type="entry name" value="P-loop containing nucleoside triphosphate hydrolases"/>
    <property type="match status" value="2"/>
</dbReference>
<dbReference type="PROSITE" id="PS50929">
    <property type="entry name" value="ABC_TM1F"/>
    <property type="match status" value="2"/>
</dbReference>
<dbReference type="PROSITE" id="PS00211">
    <property type="entry name" value="ABC_TRANSPORTER_1"/>
    <property type="match status" value="1"/>
</dbReference>
<dbReference type="PROSITE" id="PS50893">
    <property type="entry name" value="ABC_TRANSPORTER_2"/>
    <property type="match status" value="2"/>
</dbReference>
<keyword id="KW-0067">ATP-binding</keyword>
<keyword id="KW-1003">Cell membrane</keyword>
<keyword id="KW-0868">Chloride</keyword>
<keyword id="KW-0869">Chloride channel</keyword>
<keyword id="KW-0256">Endoplasmic reticulum</keyword>
<keyword id="KW-0967">Endosome</keyword>
<keyword id="KW-0325">Glycoprotein</keyword>
<keyword id="KW-0407">Ion channel</keyword>
<keyword id="KW-0406">Ion transport</keyword>
<keyword id="KW-0413">Isomerase</keyword>
<keyword id="KW-1017">Isopeptide bond</keyword>
<keyword id="KW-0449">Lipoprotein</keyword>
<keyword id="KW-0472">Membrane</keyword>
<keyword id="KW-0547">Nucleotide-binding</keyword>
<keyword id="KW-0539">Nucleus</keyword>
<keyword id="KW-0564">Palmitate</keyword>
<keyword id="KW-0597">Phosphoprotein</keyword>
<keyword id="KW-1185">Reference proteome</keyword>
<keyword id="KW-0677">Repeat</keyword>
<keyword id="KW-0812">Transmembrane</keyword>
<keyword id="KW-1133">Transmembrane helix</keyword>
<keyword id="KW-0813">Transport</keyword>
<keyword id="KW-0832">Ubl conjugation</keyword>
<reference key="1">
    <citation type="journal article" date="2003" name="Nature">
        <title>Comparative analyses of multi-species sequences from targeted genomic regions.</title>
        <authorList>
            <person name="Thomas J.W."/>
            <person name="Touchman J.W."/>
            <person name="Blakesley R.W."/>
            <person name="Bouffard G.G."/>
            <person name="Beckstrom-Sternberg S.M."/>
            <person name="Margulies E.H."/>
            <person name="Blanchette M."/>
            <person name="Siepel A.C."/>
            <person name="Thomas P.J."/>
            <person name="McDowell J.C."/>
            <person name="Maskeri B."/>
            <person name="Hansen N.F."/>
            <person name="Schwartz M.S."/>
            <person name="Weber R.J."/>
            <person name="Kent W.J."/>
            <person name="Karolchik D."/>
            <person name="Bruen T.C."/>
            <person name="Bevan R."/>
            <person name="Cutler D.J."/>
            <person name="Schwartz S."/>
            <person name="Elnitski L."/>
            <person name="Idol J.R."/>
            <person name="Prasad A.B."/>
            <person name="Lee-Lin S.-Q."/>
            <person name="Maduro V.V.B."/>
            <person name="Summers T.J."/>
            <person name="Portnoy M.E."/>
            <person name="Dietrich N.L."/>
            <person name="Akhter N."/>
            <person name="Ayele K."/>
            <person name="Benjamin B."/>
            <person name="Cariaga K."/>
            <person name="Brinkley C.P."/>
            <person name="Brooks S.Y."/>
            <person name="Granite S."/>
            <person name="Guan X."/>
            <person name="Gupta J."/>
            <person name="Haghighi P."/>
            <person name="Ho S.-L."/>
            <person name="Huang M.C."/>
            <person name="Karlins E."/>
            <person name="Laric P.L."/>
            <person name="Legaspi R."/>
            <person name="Lim M.J."/>
            <person name="Maduro Q.L."/>
            <person name="Masiello C.A."/>
            <person name="Mastrian S.D."/>
            <person name="McCloskey J.C."/>
            <person name="Pearson R."/>
            <person name="Stantripop S."/>
            <person name="Tiongson E.E."/>
            <person name="Tran J.T."/>
            <person name="Tsurgeon C."/>
            <person name="Vogt J.L."/>
            <person name="Walker M.A."/>
            <person name="Wetherby K.D."/>
            <person name="Wiggins L.S."/>
            <person name="Young A.C."/>
            <person name="Zhang L.-H."/>
            <person name="Osoegawa K."/>
            <person name="Zhu B."/>
            <person name="Zhao B."/>
            <person name="Shu C.L."/>
            <person name="De Jong P.J."/>
            <person name="Lawrence C.E."/>
            <person name="Smit A.F."/>
            <person name="Chakravarti A."/>
            <person name="Haussler D."/>
            <person name="Green P."/>
            <person name="Miller W."/>
            <person name="Green E.D."/>
        </authorList>
    </citation>
    <scope>NUCLEOTIDE SEQUENCE [LARGE SCALE GENOMIC DNA]</scope>
</reference>
<protein>
    <recommendedName>
        <fullName evidence="1">Cystic fibrosis transmembrane conductance regulator</fullName>
        <shortName>CFTR</shortName>
    </recommendedName>
    <alternativeName>
        <fullName>ATP-binding cassette sub-family C member 7</fullName>
    </alternativeName>
    <alternativeName>
        <fullName>Channel conductance-controlling ATPase</fullName>
        <ecNumber evidence="1">5.6.1.6</ecNumber>
    </alternativeName>
    <alternativeName>
        <fullName>cAMP-dependent chloride channel</fullName>
    </alternativeName>
</protein>
<sequence length="1480" mass="168239">MQRSPLEKASVVSKLFFSWTRPILRKGYRQRLELSDIYQIPSVDSADNLSEKLEREWDRELASKKNPKLINALRRCFFWRFMFYGIFLYLGEVTKAVQPLLLGRIIASYDPDNKEERSIAIYLGIGLCLLFIVRTLLLHPAIFGLHHIGMQMRIAMFSLIYKKTLKLSSRVLDKISIGQLVSLLSNNLNKFDEGLALAHFVWIAPLQVALLMGLIWELLQASAFCGLGFLIVLALFQAGLGRMMMKYRDQRAGKISERLVITSEMIENIQSVKAYCWEEAMEKMIENLRQTELKLTRKAAYVRYFNSSAFFFSGFFVVFLSVLPYALIKGIILRKIFTTISFCIVLRMAVTRQFPWAVQTWYDSLGAINKIQDFLQKQEYKTLEYNLTTTEVVMENVTAFWEEGFGELFEKAKQNNNNRKTSNGDDSLFFSNFSLLGTPVLKDINFKIERGQLLAVAGSTGAGKTSLLMMIMGELEPSEGKIKHSGRISFCSQFSWIMPGTIKENIIFGVSYDEYRYRSVIKACQLEEDISKFAEKDNIVLGEGGITLSGGQRARISLARAVYKDADLYLLDSPFGYLDVLTEKEIFESCVCKLMANKTRILVTSKMEHLKKADKILILHEGSSYFYGTFSELQNLRPDFSSKLMGCDSFDQFSAERRNSILTETLRRFSLEGDAPVSWTETKKQSFKQTGEFGEKRKNSILNPINSIRKFSIVQKTPLQMNGIEEDSDEPLERRLSLVPDSEQGEAILPRISVISTGPTLQARRRQSVLNLMTHSVNQGQNIHRKTTASTRKVSLAPQANLTELDIYSRRLSQETGLEISEEINEEDLKECFFDDMESIPAVTTWNTYLRYITVHKSLIFVLIWCLVIFLAEVAASLVVLWLLGNTPLQDKGNSTHSRNNSYAVIITSTSSYYVFYIYVGVADTLLAMGFFRGLPLVHTLITVSKILHHKMLHSVLQAPMSTLNTLKAGGILNRFSKDIAILDDLLPLTIFDFIQLLLIVIGAIAVVAVLQPYIFVATVPVIVAFIMLRAYFLQTSQQLKQLESEGRSPIFTHLVTSLKGLWTLRAFGRQPYFETLFHKALNLHTANWFLYLSTLRWFQMRIEMIFVIFFIAVTFISILTTGEGEGRVGIILTLAMNIMSTLQWAVNSSIDVDSLMRSVSRVFKFIDMPTEGKPTKSTKPYKNGQLSKVMIIENSHVKKDYIWPSGGQMTVKDLTAKYTEGGNAILENISFSISPGQRVGLLGRTGSGKSTLLSAFLRLLNTEGEIQIDGVSWDSITLQQWRKAFGVIPQKVFIFSGTFRKNLDPYEQWSDQEIWKVADEVGLRSVIEQFPGKLDFVLVDGGCVLSHGHKQLMCLARSVLSKAKILLLDEPSAHLDPVAYQIIRRTLKQAFADCTVILCEHRIEAMLECQQFLVIEENKVRQYDSIQKLLNERSLFRQAISPSDRVKLFPHRNSSKCKSKPQIAALKEETEEEVQDTRL</sequence>
<proteinExistence type="inferred from homology"/>
<comment type="function">
    <text evidence="1 2">Epithelial ion channel that plays an important role in the regulation of epithelial ion and water transport and fluid homeostasis. Mediates the transport of chloride ions across the cell membrane (By similarity). Possesses an intrinsic ATPase activity and utilizes ATP to gate its channel; the passive flow of anions through the channel is gated by cycles of ATP binding and hydrolysis by the ATP-binding domains (By similarity). The ion channel is also permeable to HCO(3)(-); selectivity depends on the extracellular chloride concentration. Exerts its function also by modulating the activity of other ion channels and transporters. Contributes to the regulation of the pH and the ion content of the epithelial fluid layer. Modulates the activity of the epithelial sodium channel (ENaC) complex, in part by regulating the cell surface expression of the ENaC complex. May regulate bicarbonate secretion and salvage in epithelial cells by regulating the transporter SLC4A7. Can inhibit the chloride channel activity of ANO1 (By similarity). Plays a role in the chloride and bicarbonate homeostasis during sperm epididymal maturation and capacitation (By similarity).</text>
</comment>
<comment type="catalytic activity">
    <reaction evidence="1">
        <text>ATP + H2O + closed Cl(-) channel = ADP + phosphate + open Cl(-) channel.</text>
        <dbReference type="EC" id="5.6.1.6"/>
    </reaction>
</comment>
<comment type="catalytic activity">
    <reaction evidence="1">
        <text>chloride(in) = chloride(out)</text>
        <dbReference type="Rhea" id="RHEA:29823"/>
        <dbReference type="ChEBI" id="CHEBI:17996"/>
    </reaction>
</comment>
<comment type="catalytic activity">
    <reaction evidence="1">
        <text>hydrogencarbonate(in) = hydrogencarbonate(out)</text>
        <dbReference type="Rhea" id="RHEA:28695"/>
        <dbReference type="ChEBI" id="CHEBI:17544"/>
    </reaction>
</comment>
<comment type="catalytic activity">
    <reaction evidence="1">
        <text>ATP + H2O = ADP + phosphate + H(+)</text>
        <dbReference type="Rhea" id="RHEA:13065"/>
        <dbReference type="ChEBI" id="CHEBI:15377"/>
        <dbReference type="ChEBI" id="CHEBI:15378"/>
        <dbReference type="ChEBI" id="CHEBI:30616"/>
        <dbReference type="ChEBI" id="CHEBI:43474"/>
        <dbReference type="ChEBI" id="CHEBI:456216"/>
    </reaction>
    <physiologicalReaction direction="left-to-right" evidence="1">
        <dbReference type="Rhea" id="RHEA:13066"/>
    </physiologicalReaction>
</comment>
<comment type="subunit">
    <text evidence="1 2 3">Monomer; does not require oligomerization for channel activity. May form oligomers in the membrane (By similarity). Interacts with SLC26A3, SLC26A6 and NHERF1 (By similarity). Interacts with SHANK2 (By similarity). Interacts with MYO6 (By similarity). Interacts (via C-terminus) with GOPC (via PDZ domain); this promotes CFTR internalization and thereby decreases channel activity. Interacts with SLC4A7 through NHERF1. Found in a complex with MYO5B and RAB11A. Interacts with ANO1. Interacts with SLC26A8 (By similarity). Interacts with AHCYL1; the interaction increases CFTR activity (By similarity). Interacts with CSE1L (By similarity). The core-glycosylated form interacts with GORASP2 (via PDZ GRASP-type 1 domain) in respone to ER stress (By similarity). Interacts with MARCHF2; the interaction leads to CFTR ubiqtuitination and degradation (By similarity). Interacts with ADGRG2 (By similarity).</text>
</comment>
<comment type="subcellular location">
    <subcellularLocation>
        <location evidence="2">Apical cell membrane</location>
        <topology evidence="1">Multi-pass membrane protein</topology>
    </subcellularLocation>
    <subcellularLocation>
        <location evidence="1">Early endosome membrane</location>
        <topology evidence="1">Multi-pass membrane protein</topology>
    </subcellularLocation>
    <subcellularLocation>
        <location evidence="2">Cell membrane</location>
        <topology evidence="1">Multi-pass membrane protein</topology>
    </subcellularLocation>
    <subcellularLocation>
        <location evidence="1">Recycling endosome membrane</location>
        <topology evidence="1">Multi-pass membrane protein</topology>
    </subcellularLocation>
    <subcellularLocation>
        <location evidence="1">Endoplasmic reticulum membrane</location>
        <topology evidence="1">Multi-pass membrane protein</topology>
    </subcellularLocation>
    <subcellularLocation>
        <location evidence="3">Nucleus</location>
    </subcellularLocation>
    <text evidence="1 3">The channel is internalized from the cell surface into an endosomal recycling compartment, from where it is recycled to the cell membrane. In the oviduct and bronchus, detected on the apical side of epithelial cells, but not associated with cilia. In Sertoli cells, a processed product is detected in the nucleus. ER stress induces GORASP2-mediated unconventional (ER/Golgi-independent) trafficking of core-glycosylated CFTR to cell membrane.</text>
</comment>
<comment type="domain">
    <text evidence="1 2">Binds and hydrolyzes ATP via the two cytoplasmic ABC transporter nucleotide-binding domains. The two ATP-binding domains interact with each other, forming a head-to-tail dimer. Normal ATPase activity requires interaction between the two domains. The first ABC transporter nucleotide-binding domain has no ATPase activity by itself.</text>
</comment>
<comment type="domain">
    <text evidence="1">The PDZ-binding motif mediates interactions with GOPC and with the SLC4A7, NHERF1/EBP50 complex.</text>
</comment>
<comment type="domain">
    <text evidence="1">The disordered R region mediates channel activation when it is phosphorylated, but not in the absence of phosphorylation.</text>
</comment>
<comment type="PTM">
    <text evidence="1">N-glycosylated.</text>
</comment>
<comment type="PTM">
    <text evidence="1">Phosphorylated; cAMP treatment promotes phosphorylation and activates the channel. Dephosphorylation decreases the ATPase activity (in vitro). Phosphorylation at PKA sites activates the channel. Phosphorylation at PKC sites enhances the response to phosphorylation by PKA. Phosphorylated by AMPK; this inhibits channel activity.</text>
</comment>
<comment type="PTM">
    <text evidence="1">Ubiquitinated, leading to its degradation in the lysosome. Deubiquitination by USP10 in early endosomes enhances its endocytic recycling to the cell membrane. Ubiquitinated by RNF185 during ER stress. Ubiquitinated by MARCHF2 (By similarity).</text>
</comment>
<comment type="similarity">
    <text evidence="8">Belongs to the ABC transporter superfamily. ABCC family. CFTR transporter (TC 3.A.1.202) subfamily.</text>
</comment>
<gene>
    <name evidence="1" type="primary">CFTR</name>
    <name type="synonym">ABCC7</name>
</gene>
<evidence type="ECO:0000250" key="1">
    <source>
        <dbReference type="UniProtKB" id="P13569"/>
    </source>
</evidence>
<evidence type="ECO:0000250" key="2">
    <source>
        <dbReference type="UniProtKB" id="P26361"/>
    </source>
</evidence>
<evidence type="ECO:0000250" key="3">
    <source>
        <dbReference type="UniProtKB" id="P34158"/>
    </source>
</evidence>
<evidence type="ECO:0000255" key="4"/>
<evidence type="ECO:0000255" key="5">
    <source>
        <dbReference type="PROSITE-ProRule" id="PRU00434"/>
    </source>
</evidence>
<evidence type="ECO:0000255" key="6">
    <source>
        <dbReference type="PROSITE-ProRule" id="PRU00441"/>
    </source>
</evidence>
<evidence type="ECO:0000256" key="7">
    <source>
        <dbReference type="SAM" id="MobiDB-lite"/>
    </source>
</evidence>
<evidence type="ECO:0000305" key="8"/>
<organism>
    <name type="scientific">Pan troglodytes</name>
    <name type="common">Chimpanzee</name>
    <dbReference type="NCBI Taxonomy" id="9598"/>
    <lineage>
        <taxon>Eukaryota</taxon>
        <taxon>Metazoa</taxon>
        <taxon>Chordata</taxon>
        <taxon>Craniata</taxon>
        <taxon>Vertebrata</taxon>
        <taxon>Euteleostomi</taxon>
        <taxon>Mammalia</taxon>
        <taxon>Eutheria</taxon>
        <taxon>Euarchontoglires</taxon>
        <taxon>Primates</taxon>
        <taxon>Haplorrhini</taxon>
        <taxon>Catarrhini</taxon>
        <taxon>Hominidae</taxon>
        <taxon>Pan</taxon>
    </lineage>
</organism>